<proteinExistence type="inferred from homology"/>
<protein>
    <recommendedName>
        <fullName>Multidrug resistance protein NorM</fullName>
    </recommendedName>
    <alternativeName>
        <fullName>Multidrug-efflux transporter</fullName>
    </alternativeName>
    <alternativeName>
        <fullName>Na(+)/drug antiporter</fullName>
    </alternativeName>
</protein>
<gene>
    <name type="primary">norM</name>
    <name type="ordered locus">VV1730</name>
</gene>
<evidence type="ECO:0000250" key="1"/>
<evidence type="ECO:0000255" key="2"/>
<evidence type="ECO:0000305" key="3"/>
<name>NORM_VIBVY</name>
<dbReference type="EMBL" id="BA000037">
    <property type="protein sequence ID" value="BAC94494.1"/>
    <property type="status" value="ALT_INIT"/>
    <property type="molecule type" value="Genomic_DNA"/>
</dbReference>
<dbReference type="RefSeq" id="WP_011150316.1">
    <property type="nucleotide sequence ID" value="NC_005139.1"/>
</dbReference>
<dbReference type="SMR" id="Q7MKP8"/>
<dbReference type="STRING" id="672.VV93_v1c16220"/>
<dbReference type="KEGG" id="vvy:VV1730"/>
<dbReference type="PATRIC" id="fig|196600.6.peg.1705"/>
<dbReference type="eggNOG" id="COG0534">
    <property type="taxonomic scope" value="Bacteria"/>
</dbReference>
<dbReference type="HOGENOM" id="CLU_012893_6_0_6"/>
<dbReference type="Proteomes" id="UP000002675">
    <property type="component" value="Chromosome I"/>
</dbReference>
<dbReference type="GO" id="GO:0005886">
    <property type="term" value="C:plasma membrane"/>
    <property type="evidence" value="ECO:0007669"/>
    <property type="project" value="UniProtKB-SubCell"/>
</dbReference>
<dbReference type="GO" id="GO:0015297">
    <property type="term" value="F:antiporter activity"/>
    <property type="evidence" value="ECO:0007669"/>
    <property type="project" value="UniProtKB-KW"/>
</dbReference>
<dbReference type="GO" id="GO:0042910">
    <property type="term" value="F:xenobiotic transmembrane transporter activity"/>
    <property type="evidence" value="ECO:0007669"/>
    <property type="project" value="InterPro"/>
</dbReference>
<dbReference type="GO" id="GO:0006814">
    <property type="term" value="P:sodium ion transport"/>
    <property type="evidence" value="ECO:0007669"/>
    <property type="project" value="UniProtKB-KW"/>
</dbReference>
<dbReference type="CDD" id="cd13131">
    <property type="entry name" value="MATE_NorM_like"/>
    <property type="match status" value="1"/>
</dbReference>
<dbReference type="InterPro" id="IPR002528">
    <property type="entry name" value="MATE_fam"/>
</dbReference>
<dbReference type="InterPro" id="IPR050222">
    <property type="entry name" value="MATE_MdtK"/>
</dbReference>
<dbReference type="InterPro" id="IPR048279">
    <property type="entry name" value="MdtK-like"/>
</dbReference>
<dbReference type="NCBIfam" id="TIGR00797">
    <property type="entry name" value="matE"/>
    <property type="match status" value="1"/>
</dbReference>
<dbReference type="PANTHER" id="PTHR43298:SF2">
    <property type="entry name" value="FMN_FAD EXPORTER YEEO-RELATED"/>
    <property type="match status" value="1"/>
</dbReference>
<dbReference type="PANTHER" id="PTHR43298">
    <property type="entry name" value="MULTIDRUG RESISTANCE PROTEIN NORM-RELATED"/>
    <property type="match status" value="1"/>
</dbReference>
<dbReference type="Pfam" id="PF01554">
    <property type="entry name" value="MatE"/>
    <property type="match status" value="2"/>
</dbReference>
<dbReference type="PIRSF" id="PIRSF006603">
    <property type="entry name" value="DinF"/>
    <property type="match status" value="1"/>
</dbReference>
<sequence length="456" mass="49148">MHRYKKEASSLIKLATPVLIASVAQTGMGFVDTVMAGGVSATDMAAVSVAASIWLPSILFGIGLLMALVPVVAQLNGAGKREQVPFEIQQGAVMALLISIPIIGVLFQTQWILGYMNVDAVMATKTIGYIHAVMFAVPAFLLFQTLRSLTDGLSLTKPAMVIGFIGLLLNIPLNWMFVYGKLGAPALGGVGCGVATAIVYWIMFLLLLLYVTTSQRLRQVQLFTTFHPPQLNAQVKLFKLGFPVAAALFFEVTLFAVVALLVAPLGSTVVAAHQVAINFSSLVFMLPMSIGAATSIRVGHMLGEKSTEGARIASHVGILVGLSTAVFTALLTVILREQIALLYTDNRVVITLAMQLLIFAAIYQCTDAIQVIAAGALRGYKDMRAIFNRTFIAYWLLGLPTGYVLGLTDWIVEPMGAQGFWIGFIVGLSSAAAMLGVRLHWLHRQNDEIQLNYEAR</sequence>
<keyword id="KW-0050">Antiport</keyword>
<keyword id="KW-0997">Cell inner membrane</keyword>
<keyword id="KW-1003">Cell membrane</keyword>
<keyword id="KW-0406">Ion transport</keyword>
<keyword id="KW-0472">Membrane</keyword>
<keyword id="KW-0915">Sodium</keyword>
<keyword id="KW-0739">Sodium transport</keyword>
<keyword id="KW-0812">Transmembrane</keyword>
<keyword id="KW-1133">Transmembrane helix</keyword>
<keyword id="KW-0813">Transport</keyword>
<reference key="1">
    <citation type="journal article" date="2003" name="Genome Res.">
        <title>Comparative genome analysis of Vibrio vulnificus, a marine pathogen.</title>
        <authorList>
            <person name="Chen C.-Y."/>
            <person name="Wu K.-M."/>
            <person name="Chang Y.-C."/>
            <person name="Chang C.-H."/>
            <person name="Tsai H.-C."/>
            <person name="Liao T.-L."/>
            <person name="Liu Y.-M."/>
            <person name="Chen H.-J."/>
            <person name="Shen A.B.-T."/>
            <person name="Li J.-C."/>
            <person name="Su T.-L."/>
            <person name="Shao C.-P."/>
            <person name="Lee C.-T."/>
            <person name="Hor L.-I."/>
            <person name="Tsai S.-F."/>
        </authorList>
    </citation>
    <scope>NUCLEOTIDE SEQUENCE [LARGE SCALE GENOMIC DNA]</scope>
    <source>
        <strain>YJ016</strain>
    </source>
</reference>
<feature type="chain" id="PRO_0000164248" description="Multidrug resistance protein NorM">
    <location>
        <begin position="1"/>
        <end position="456"/>
    </location>
</feature>
<feature type="transmembrane region" description="Helical" evidence="2">
    <location>
        <begin position="11"/>
        <end position="31"/>
    </location>
</feature>
<feature type="transmembrane region" description="Helical" evidence="2">
    <location>
        <begin position="53"/>
        <end position="73"/>
    </location>
</feature>
<feature type="transmembrane region" description="Helical" evidence="2">
    <location>
        <begin position="93"/>
        <end position="113"/>
    </location>
</feature>
<feature type="transmembrane region" description="Helical" evidence="2">
    <location>
        <begin position="126"/>
        <end position="146"/>
    </location>
</feature>
<feature type="transmembrane region" description="Helical" evidence="2">
    <location>
        <begin position="159"/>
        <end position="179"/>
    </location>
</feature>
<feature type="transmembrane region" description="Helical" evidence="2">
    <location>
        <begin position="189"/>
        <end position="209"/>
    </location>
</feature>
<feature type="transmembrane region" description="Helical" evidence="2">
    <location>
        <begin position="242"/>
        <end position="262"/>
    </location>
</feature>
<feature type="transmembrane region" description="Helical" evidence="2">
    <location>
        <begin position="276"/>
        <end position="296"/>
    </location>
</feature>
<feature type="transmembrane region" description="Helical" evidence="2">
    <location>
        <begin position="315"/>
        <end position="335"/>
    </location>
</feature>
<feature type="transmembrane region" description="Helical" evidence="2">
    <location>
        <begin position="356"/>
        <end position="376"/>
    </location>
</feature>
<feature type="transmembrane region" description="Helical" evidence="2">
    <location>
        <begin position="391"/>
        <end position="411"/>
    </location>
</feature>
<feature type="transmembrane region" description="Helical" evidence="2">
    <location>
        <begin position="417"/>
        <end position="437"/>
    </location>
</feature>
<comment type="function">
    <text evidence="1">Multidrug efflux pump that functions as a Na(+)/drug antiporter.</text>
</comment>
<comment type="subcellular location">
    <subcellularLocation>
        <location evidence="1">Cell inner membrane</location>
        <topology evidence="1">Multi-pass membrane protein</topology>
    </subcellularLocation>
</comment>
<comment type="similarity">
    <text evidence="3">Belongs to the multi antimicrobial extrusion (MATE) (TC 2.A.66.1) family.</text>
</comment>
<comment type="sequence caution" evidence="3">
    <conflict type="erroneous initiation">
        <sequence resource="EMBL-CDS" id="BAC94494"/>
    </conflict>
</comment>
<accession>Q7MKP8</accession>
<organism>
    <name type="scientific">Vibrio vulnificus (strain YJ016)</name>
    <dbReference type="NCBI Taxonomy" id="196600"/>
    <lineage>
        <taxon>Bacteria</taxon>
        <taxon>Pseudomonadati</taxon>
        <taxon>Pseudomonadota</taxon>
        <taxon>Gammaproteobacteria</taxon>
        <taxon>Vibrionales</taxon>
        <taxon>Vibrionaceae</taxon>
        <taxon>Vibrio</taxon>
    </lineage>
</organism>